<organism>
    <name type="scientific">Streptococcus gordonii (strain Challis / ATCC 35105 / BCRC 15272 / CH1 / DL1 / V288)</name>
    <dbReference type="NCBI Taxonomy" id="467705"/>
    <lineage>
        <taxon>Bacteria</taxon>
        <taxon>Bacillati</taxon>
        <taxon>Bacillota</taxon>
        <taxon>Bacilli</taxon>
        <taxon>Lactobacillales</taxon>
        <taxon>Streptococcaceae</taxon>
        <taxon>Streptococcus</taxon>
    </lineage>
</organism>
<protein>
    <recommendedName>
        <fullName evidence="1">Ribosomal RNA small subunit methyltransferase A</fullName>
        <ecNumber evidence="1">2.1.1.182</ecNumber>
    </recommendedName>
    <alternativeName>
        <fullName evidence="1">16S rRNA (adenine(1518)-N(6)/adenine(1519)-N(6))-dimethyltransferase</fullName>
    </alternativeName>
    <alternativeName>
        <fullName evidence="1">16S rRNA dimethyladenosine transferase</fullName>
    </alternativeName>
    <alternativeName>
        <fullName evidence="1">16S rRNA dimethylase</fullName>
    </alternativeName>
    <alternativeName>
        <fullName evidence="1">S-adenosylmethionine-6-N', N'-adenosyl(rRNA) dimethyltransferase</fullName>
    </alternativeName>
</protein>
<reference key="1">
    <citation type="journal article" date="2007" name="J. Bacteriol.">
        <title>Genome-wide transcriptional changes in Streptococcus gordonii in response to competence signaling peptide.</title>
        <authorList>
            <person name="Vickerman M.M."/>
            <person name="Iobst S."/>
            <person name="Jesionowski A.M."/>
            <person name="Gill S.R."/>
        </authorList>
    </citation>
    <scope>NUCLEOTIDE SEQUENCE [LARGE SCALE GENOMIC DNA]</scope>
    <source>
        <strain>Challis / ATCC 35105 / BCRC 15272 / CH1 / DL1 / V288</strain>
    </source>
</reference>
<keyword id="KW-0963">Cytoplasm</keyword>
<keyword id="KW-0489">Methyltransferase</keyword>
<keyword id="KW-1185">Reference proteome</keyword>
<keyword id="KW-0694">RNA-binding</keyword>
<keyword id="KW-0698">rRNA processing</keyword>
<keyword id="KW-0949">S-adenosyl-L-methionine</keyword>
<keyword id="KW-0808">Transferase</keyword>
<evidence type="ECO:0000255" key="1">
    <source>
        <dbReference type="HAMAP-Rule" id="MF_00607"/>
    </source>
</evidence>
<gene>
    <name evidence="1" type="primary">rsmA</name>
    <name evidence="1" type="synonym">ksgA</name>
    <name type="ordered locus">SGO_0193</name>
</gene>
<proteinExistence type="inferred from homology"/>
<name>RSMA_STRGC</name>
<feature type="chain" id="PRO_1000082567" description="Ribosomal RNA small subunit methyltransferase A">
    <location>
        <begin position="1"/>
        <end position="290"/>
    </location>
</feature>
<feature type="binding site" evidence="1">
    <location>
        <position position="27"/>
    </location>
    <ligand>
        <name>S-adenosyl-L-methionine</name>
        <dbReference type="ChEBI" id="CHEBI:59789"/>
    </ligand>
</feature>
<feature type="binding site" evidence="1">
    <location>
        <position position="29"/>
    </location>
    <ligand>
        <name>S-adenosyl-L-methionine</name>
        <dbReference type="ChEBI" id="CHEBI:59789"/>
    </ligand>
</feature>
<feature type="binding site" evidence="1">
    <location>
        <position position="54"/>
    </location>
    <ligand>
        <name>S-adenosyl-L-methionine</name>
        <dbReference type="ChEBI" id="CHEBI:59789"/>
    </ligand>
</feature>
<feature type="binding site" evidence="1">
    <location>
        <position position="75"/>
    </location>
    <ligand>
        <name>S-adenosyl-L-methionine</name>
        <dbReference type="ChEBI" id="CHEBI:59789"/>
    </ligand>
</feature>
<feature type="binding site" evidence="1">
    <location>
        <position position="100"/>
    </location>
    <ligand>
        <name>S-adenosyl-L-methionine</name>
        <dbReference type="ChEBI" id="CHEBI:59789"/>
    </ligand>
</feature>
<feature type="binding site" evidence="1">
    <location>
        <position position="125"/>
    </location>
    <ligand>
        <name>S-adenosyl-L-methionine</name>
        <dbReference type="ChEBI" id="CHEBI:59789"/>
    </ligand>
</feature>
<dbReference type="EC" id="2.1.1.182" evidence="1"/>
<dbReference type="EMBL" id="CP000725">
    <property type="protein sequence ID" value="ABV09208.1"/>
    <property type="molecule type" value="Genomic_DNA"/>
</dbReference>
<dbReference type="RefSeq" id="WP_011999733.1">
    <property type="nucleotide sequence ID" value="NC_009785.1"/>
</dbReference>
<dbReference type="SMR" id="A8AUQ4"/>
<dbReference type="STRING" id="467705.SGO_0193"/>
<dbReference type="KEGG" id="sgo:SGO_0193"/>
<dbReference type="eggNOG" id="COG0030">
    <property type="taxonomic scope" value="Bacteria"/>
</dbReference>
<dbReference type="HOGENOM" id="CLU_041220_0_0_9"/>
<dbReference type="Proteomes" id="UP000001131">
    <property type="component" value="Chromosome"/>
</dbReference>
<dbReference type="GO" id="GO:0005829">
    <property type="term" value="C:cytosol"/>
    <property type="evidence" value="ECO:0007669"/>
    <property type="project" value="TreeGrafter"/>
</dbReference>
<dbReference type="GO" id="GO:0052908">
    <property type="term" value="F:16S rRNA (adenine(1518)-N(6)/adenine(1519)-N(6))-dimethyltransferase activity"/>
    <property type="evidence" value="ECO:0007669"/>
    <property type="project" value="UniProtKB-EC"/>
</dbReference>
<dbReference type="GO" id="GO:0003723">
    <property type="term" value="F:RNA binding"/>
    <property type="evidence" value="ECO:0007669"/>
    <property type="project" value="UniProtKB-KW"/>
</dbReference>
<dbReference type="CDD" id="cd02440">
    <property type="entry name" value="AdoMet_MTases"/>
    <property type="match status" value="1"/>
</dbReference>
<dbReference type="FunFam" id="3.40.50.150:FF:000023">
    <property type="entry name" value="Ribosomal RNA small subunit methyltransferase A"/>
    <property type="match status" value="1"/>
</dbReference>
<dbReference type="Gene3D" id="1.10.8.100">
    <property type="entry name" value="Ribosomal RNA adenine dimethylase-like, domain 2"/>
    <property type="match status" value="1"/>
</dbReference>
<dbReference type="Gene3D" id="3.40.50.150">
    <property type="entry name" value="Vaccinia Virus protein VP39"/>
    <property type="match status" value="1"/>
</dbReference>
<dbReference type="HAMAP" id="MF_00607">
    <property type="entry name" value="16SrRNA_methyltr_A"/>
    <property type="match status" value="1"/>
</dbReference>
<dbReference type="InterPro" id="IPR001737">
    <property type="entry name" value="KsgA/Erm"/>
</dbReference>
<dbReference type="InterPro" id="IPR023165">
    <property type="entry name" value="rRNA_Ade_diMease-like_C"/>
</dbReference>
<dbReference type="InterPro" id="IPR020596">
    <property type="entry name" value="rRNA_Ade_Mease_Trfase_CS"/>
</dbReference>
<dbReference type="InterPro" id="IPR020598">
    <property type="entry name" value="rRNA_Ade_methylase_Trfase_N"/>
</dbReference>
<dbReference type="InterPro" id="IPR011530">
    <property type="entry name" value="rRNA_adenine_dimethylase"/>
</dbReference>
<dbReference type="InterPro" id="IPR029063">
    <property type="entry name" value="SAM-dependent_MTases_sf"/>
</dbReference>
<dbReference type="NCBIfam" id="TIGR00755">
    <property type="entry name" value="ksgA"/>
    <property type="match status" value="1"/>
</dbReference>
<dbReference type="PANTHER" id="PTHR11727">
    <property type="entry name" value="DIMETHYLADENOSINE TRANSFERASE"/>
    <property type="match status" value="1"/>
</dbReference>
<dbReference type="PANTHER" id="PTHR11727:SF7">
    <property type="entry name" value="DIMETHYLADENOSINE TRANSFERASE-RELATED"/>
    <property type="match status" value="1"/>
</dbReference>
<dbReference type="Pfam" id="PF00398">
    <property type="entry name" value="RrnaAD"/>
    <property type="match status" value="1"/>
</dbReference>
<dbReference type="SMART" id="SM00650">
    <property type="entry name" value="rADc"/>
    <property type="match status" value="1"/>
</dbReference>
<dbReference type="SUPFAM" id="SSF53335">
    <property type="entry name" value="S-adenosyl-L-methionine-dependent methyltransferases"/>
    <property type="match status" value="1"/>
</dbReference>
<dbReference type="PROSITE" id="PS01131">
    <property type="entry name" value="RRNA_A_DIMETH"/>
    <property type="match status" value="1"/>
</dbReference>
<dbReference type="PROSITE" id="PS51689">
    <property type="entry name" value="SAM_RNA_A_N6_MT"/>
    <property type="match status" value="1"/>
</dbReference>
<sequence>MRIADYSVTRAILERHGFTFKKSFGQNFLTDTNILQKIVDTAEIDKNVNVIEIGPGIGALTEFLAENAAEVMAFEIDDRLVPILADTLRDFDNVTVVNQDILKVDLAQYIAEFKNPDLPIKVVANLPYYITTPILMHLIESGIPFSEFVVMMQKEVADRISAQPNTKAYGSLSIAVQYYMTAKVAFIVPRTVFVPAPNVDSAILKMVRREQPAVEVQDEKFFFKVTKASFVHRRKTLWNNLTSYFGKSEEVKEKLENALAKANLVANVRGEALDLVAFARLSDALKSEGL</sequence>
<comment type="function">
    <text evidence="1">Specifically dimethylates two adjacent adenosines (A1518 and A1519) in the loop of a conserved hairpin near the 3'-end of 16S rRNA in the 30S particle. May play a critical role in biogenesis of 30S subunits.</text>
</comment>
<comment type="catalytic activity">
    <reaction evidence="1">
        <text>adenosine(1518)/adenosine(1519) in 16S rRNA + 4 S-adenosyl-L-methionine = N(6)-dimethyladenosine(1518)/N(6)-dimethyladenosine(1519) in 16S rRNA + 4 S-adenosyl-L-homocysteine + 4 H(+)</text>
        <dbReference type="Rhea" id="RHEA:19609"/>
        <dbReference type="Rhea" id="RHEA-COMP:10232"/>
        <dbReference type="Rhea" id="RHEA-COMP:10233"/>
        <dbReference type="ChEBI" id="CHEBI:15378"/>
        <dbReference type="ChEBI" id="CHEBI:57856"/>
        <dbReference type="ChEBI" id="CHEBI:59789"/>
        <dbReference type="ChEBI" id="CHEBI:74411"/>
        <dbReference type="ChEBI" id="CHEBI:74493"/>
        <dbReference type="EC" id="2.1.1.182"/>
    </reaction>
</comment>
<comment type="subcellular location">
    <subcellularLocation>
        <location evidence="1">Cytoplasm</location>
    </subcellularLocation>
</comment>
<comment type="similarity">
    <text evidence="1">Belongs to the class I-like SAM-binding methyltransferase superfamily. rRNA adenine N(6)-methyltransferase family. RsmA subfamily.</text>
</comment>
<accession>A8AUQ4</accession>